<name>DAPH_STRP7</name>
<reference key="1">
    <citation type="journal article" date="2010" name="Genome Biol.">
        <title>Structure and dynamics of the pan-genome of Streptococcus pneumoniae and closely related species.</title>
        <authorList>
            <person name="Donati C."/>
            <person name="Hiller N.L."/>
            <person name="Tettelin H."/>
            <person name="Muzzi A."/>
            <person name="Croucher N.J."/>
            <person name="Angiuoli S.V."/>
            <person name="Oggioni M."/>
            <person name="Dunning Hotopp J.C."/>
            <person name="Hu F.Z."/>
            <person name="Riley D.R."/>
            <person name="Covacci A."/>
            <person name="Mitchell T.J."/>
            <person name="Bentley S.D."/>
            <person name="Kilian M."/>
            <person name="Ehrlich G.D."/>
            <person name="Rappuoli R."/>
            <person name="Moxon E.R."/>
            <person name="Masignani V."/>
        </authorList>
    </citation>
    <scope>NUCLEOTIDE SEQUENCE [LARGE SCALE GENOMIC DNA]</scope>
    <source>
        <strain>70585</strain>
    </source>
</reference>
<sequence>MTATKMNAQEIIQFIANAEKKTSVKVTFEGQLATAVPSSVVKLGNVLFGDWKDVAPLLEGLVENQDYVVEQDARNSAVPLLDKRAINARIEPGAIIRDQVEIGDNAVIMMGAVINIGAEIGAGTMIDMGAILGGRAIVGKNSHVGAGAVLAGVIEPASAEPVRVGDNVLIGANAVVIEGVQIGSGSVVAAGAIVTQDVPENVVVAGVPARIIKEIDAQTQQKTALEDALRTL</sequence>
<protein>
    <recommendedName>
        <fullName evidence="1">2,3,4,5-tetrahydropyridine-2,6-dicarboxylate N-acetyltransferase</fullName>
        <ecNumber evidence="1">2.3.1.89</ecNumber>
    </recommendedName>
    <alternativeName>
        <fullName evidence="1">Tetrahydrodipicolinate N-acetyltransferase</fullName>
        <shortName evidence="1">THP acetyltransferase</shortName>
        <shortName evidence="1">Tetrahydropicolinate acetylase</shortName>
    </alternativeName>
</protein>
<feature type="chain" id="PRO_1000187452" description="2,3,4,5-tetrahydropyridine-2,6-dicarboxylate N-acetyltransferase">
    <location>
        <begin position="1"/>
        <end position="232"/>
    </location>
</feature>
<organism>
    <name type="scientific">Streptococcus pneumoniae (strain 70585)</name>
    <dbReference type="NCBI Taxonomy" id="488221"/>
    <lineage>
        <taxon>Bacteria</taxon>
        <taxon>Bacillati</taxon>
        <taxon>Bacillota</taxon>
        <taxon>Bacilli</taxon>
        <taxon>Lactobacillales</taxon>
        <taxon>Streptococcaceae</taxon>
        <taxon>Streptococcus</taxon>
    </lineage>
</organism>
<accession>C1CAS4</accession>
<gene>
    <name evidence="1" type="primary">dapH</name>
    <name type="ordered locus">SP70585_2203</name>
</gene>
<dbReference type="EC" id="2.3.1.89" evidence="1"/>
<dbReference type="EMBL" id="CP000918">
    <property type="protein sequence ID" value="ACO17071.1"/>
    <property type="molecule type" value="Genomic_DNA"/>
</dbReference>
<dbReference type="SMR" id="C1CAS4"/>
<dbReference type="KEGG" id="snm:SP70585_2203"/>
<dbReference type="HOGENOM" id="CLU_103751_0_0_9"/>
<dbReference type="UniPathway" id="UPA00034">
    <property type="reaction ID" value="UER00022"/>
</dbReference>
<dbReference type="Proteomes" id="UP000002211">
    <property type="component" value="Chromosome"/>
</dbReference>
<dbReference type="GO" id="GO:0047200">
    <property type="term" value="F:tetrahydrodipicolinate N-acetyltransferase activity"/>
    <property type="evidence" value="ECO:0007669"/>
    <property type="project" value="UniProtKB-EC"/>
</dbReference>
<dbReference type="GO" id="GO:0019877">
    <property type="term" value="P:diaminopimelate biosynthetic process"/>
    <property type="evidence" value="ECO:0007669"/>
    <property type="project" value="UniProtKB-UniRule"/>
</dbReference>
<dbReference type="GO" id="GO:0009089">
    <property type="term" value="P:lysine biosynthetic process via diaminopimelate"/>
    <property type="evidence" value="ECO:0007669"/>
    <property type="project" value="UniProtKB-UniRule"/>
</dbReference>
<dbReference type="Gene3D" id="2.160.10.10">
    <property type="entry name" value="Hexapeptide repeat proteins"/>
    <property type="match status" value="1"/>
</dbReference>
<dbReference type="Gene3D" id="3.30.70.250">
    <property type="entry name" value="Malonyl-CoA ACP transacylase, ACP-binding"/>
    <property type="match status" value="1"/>
</dbReference>
<dbReference type="HAMAP" id="MF_01691">
    <property type="entry name" value="DapH"/>
    <property type="match status" value="1"/>
</dbReference>
<dbReference type="InterPro" id="IPR019873">
    <property type="entry name" value="DapH"/>
</dbReference>
<dbReference type="InterPro" id="IPR013710">
    <property type="entry name" value="DapH_N"/>
</dbReference>
<dbReference type="InterPro" id="IPR001451">
    <property type="entry name" value="Hexapep"/>
</dbReference>
<dbReference type="InterPro" id="IPR018357">
    <property type="entry name" value="Hexapep_transf_CS"/>
</dbReference>
<dbReference type="InterPro" id="IPR050179">
    <property type="entry name" value="Trans_hexapeptide_repeat"/>
</dbReference>
<dbReference type="InterPro" id="IPR011004">
    <property type="entry name" value="Trimer_LpxA-like_sf"/>
</dbReference>
<dbReference type="NCBIfam" id="TIGR03532">
    <property type="entry name" value="DapD_Ac"/>
    <property type="match status" value="1"/>
</dbReference>
<dbReference type="PANTHER" id="PTHR43300:SF10">
    <property type="entry name" value="2,3,4,5-TETRAHYDROPYRIDINE-2,6-DICARBOXYLATE N-ACETYLTRANSFERASE"/>
    <property type="match status" value="1"/>
</dbReference>
<dbReference type="PANTHER" id="PTHR43300">
    <property type="entry name" value="ACETYLTRANSFERASE"/>
    <property type="match status" value="1"/>
</dbReference>
<dbReference type="Pfam" id="PF08503">
    <property type="entry name" value="DapH_N"/>
    <property type="match status" value="1"/>
</dbReference>
<dbReference type="Pfam" id="PF00132">
    <property type="entry name" value="Hexapep"/>
    <property type="match status" value="1"/>
</dbReference>
<dbReference type="Pfam" id="PF14602">
    <property type="entry name" value="Hexapep_2"/>
    <property type="match status" value="2"/>
</dbReference>
<dbReference type="SUPFAM" id="SSF51161">
    <property type="entry name" value="Trimeric LpxA-like enzymes"/>
    <property type="match status" value="1"/>
</dbReference>
<dbReference type="PROSITE" id="PS00101">
    <property type="entry name" value="HEXAPEP_TRANSFERASES"/>
    <property type="match status" value="2"/>
</dbReference>
<keyword id="KW-0012">Acyltransferase</keyword>
<keyword id="KW-0028">Amino-acid biosynthesis</keyword>
<keyword id="KW-0220">Diaminopimelate biosynthesis</keyword>
<keyword id="KW-0457">Lysine biosynthesis</keyword>
<keyword id="KW-0677">Repeat</keyword>
<keyword id="KW-0808">Transferase</keyword>
<comment type="function">
    <text evidence="1">Catalyzes the transfer of an acetyl group from acetyl-CoA to tetrahydrodipicolinate.</text>
</comment>
<comment type="catalytic activity">
    <reaction evidence="1">
        <text>(S)-2,3,4,5-tetrahydrodipicolinate + acetyl-CoA + H2O = L-2-acetamido-6-oxoheptanedioate + CoA</text>
        <dbReference type="Rhea" id="RHEA:13085"/>
        <dbReference type="ChEBI" id="CHEBI:15377"/>
        <dbReference type="ChEBI" id="CHEBI:16845"/>
        <dbReference type="ChEBI" id="CHEBI:57287"/>
        <dbReference type="ChEBI" id="CHEBI:57288"/>
        <dbReference type="ChEBI" id="CHEBI:58117"/>
        <dbReference type="EC" id="2.3.1.89"/>
    </reaction>
</comment>
<comment type="pathway">
    <text evidence="1">Amino-acid biosynthesis; L-lysine biosynthesis via DAP pathway; LL-2,6-diaminopimelate from (S)-tetrahydrodipicolinate (acetylase route): step 1/3.</text>
</comment>
<comment type="similarity">
    <text evidence="1">Belongs to the transferase hexapeptide repeat family. DapH subfamily.</text>
</comment>
<evidence type="ECO:0000255" key="1">
    <source>
        <dbReference type="HAMAP-Rule" id="MF_01691"/>
    </source>
</evidence>
<proteinExistence type="inferred from homology"/>